<reference key="1">
    <citation type="journal article" date="2008" name="Genome Res.">
        <title>The genome of Pelotomaculum thermopropionicum reveals niche-associated evolution in anaerobic microbiota.</title>
        <authorList>
            <person name="Kosaka T."/>
            <person name="Kato S."/>
            <person name="Shimoyama T."/>
            <person name="Ishii S."/>
            <person name="Abe T."/>
            <person name="Watanabe K."/>
        </authorList>
    </citation>
    <scope>NUCLEOTIDE SEQUENCE [LARGE SCALE GENOMIC DNA]</scope>
    <source>
        <strain>DSM 13744 / JCM 10971 / SI</strain>
    </source>
</reference>
<feature type="chain" id="PRO_1000080791" description="Transcriptional repressor NrdR">
    <location>
        <begin position="1"/>
        <end position="166"/>
    </location>
</feature>
<feature type="domain" description="ATP-cone" evidence="1">
    <location>
        <begin position="49"/>
        <end position="139"/>
    </location>
</feature>
<feature type="zinc finger region" evidence="1">
    <location>
        <begin position="3"/>
        <end position="34"/>
    </location>
</feature>
<sequence length="166" mass="19410">MRCPFCGFSDSRVLDSRPTVEGNSIRRRRECCGCSKRFTTYERVDEPSLIVVKKDGRREAFHRQKLLQGLIKACQKRPVSTEKLEAIVDGIERELRQTMEPEIKSQYIGELVMERLRKLDEVAYVRFASVYREFRDAESFMEELKNLLEKNREGLRGGPGDHVQDH</sequence>
<comment type="function">
    <text evidence="1">Negatively regulates transcription of bacterial ribonucleotide reductase nrd genes and operons by binding to NrdR-boxes.</text>
</comment>
<comment type="cofactor">
    <cofactor evidence="1">
        <name>Zn(2+)</name>
        <dbReference type="ChEBI" id="CHEBI:29105"/>
    </cofactor>
    <text evidence="1">Binds 1 zinc ion.</text>
</comment>
<comment type="similarity">
    <text evidence="1">Belongs to the NrdR family.</text>
</comment>
<keyword id="KW-0067">ATP-binding</keyword>
<keyword id="KW-0238">DNA-binding</keyword>
<keyword id="KW-0479">Metal-binding</keyword>
<keyword id="KW-0547">Nucleotide-binding</keyword>
<keyword id="KW-1185">Reference proteome</keyword>
<keyword id="KW-0678">Repressor</keyword>
<keyword id="KW-0804">Transcription</keyword>
<keyword id="KW-0805">Transcription regulation</keyword>
<keyword id="KW-0862">Zinc</keyword>
<keyword id="KW-0863">Zinc-finger</keyword>
<proteinExistence type="inferred from homology"/>
<accession>A5D165</accession>
<organism>
    <name type="scientific">Pelotomaculum thermopropionicum (strain DSM 13744 / JCM 10971 / SI)</name>
    <dbReference type="NCBI Taxonomy" id="370438"/>
    <lineage>
        <taxon>Bacteria</taxon>
        <taxon>Bacillati</taxon>
        <taxon>Bacillota</taxon>
        <taxon>Clostridia</taxon>
        <taxon>Eubacteriales</taxon>
        <taxon>Desulfotomaculaceae</taxon>
        <taxon>Pelotomaculum</taxon>
    </lineage>
</organism>
<gene>
    <name evidence="1" type="primary">nrdR</name>
    <name type="ordered locus">PTH_1843</name>
</gene>
<dbReference type="EMBL" id="AP009389">
    <property type="protein sequence ID" value="BAF60024.1"/>
    <property type="molecule type" value="Genomic_DNA"/>
</dbReference>
<dbReference type="SMR" id="A5D165"/>
<dbReference type="STRING" id="370438.PTH_1843"/>
<dbReference type="KEGG" id="pth:PTH_1843"/>
<dbReference type="eggNOG" id="COG1327">
    <property type="taxonomic scope" value="Bacteria"/>
</dbReference>
<dbReference type="HOGENOM" id="CLU_108412_0_0_9"/>
<dbReference type="Proteomes" id="UP000006556">
    <property type="component" value="Chromosome"/>
</dbReference>
<dbReference type="GO" id="GO:0005524">
    <property type="term" value="F:ATP binding"/>
    <property type="evidence" value="ECO:0007669"/>
    <property type="project" value="UniProtKB-KW"/>
</dbReference>
<dbReference type="GO" id="GO:0003677">
    <property type="term" value="F:DNA binding"/>
    <property type="evidence" value="ECO:0007669"/>
    <property type="project" value="UniProtKB-KW"/>
</dbReference>
<dbReference type="GO" id="GO:0008270">
    <property type="term" value="F:zinc ion binding"/>
    <property type="evidence" value="ECO:0007669"/>
    <property type="project" value="UniProtKB-UniRule"/>
</dbReference>
<dbReference type="GO" id="GO:0045892">
    <property type="term" value="P:negative regulation of DNA-templated transcription"/>
    <property type="evidence" value="ECO:0007669"/>
    <property type="project" value="UniProtKB-UniRule"/>
</dbReference>
<dbReference type="HAMAP" id="MF_00440">
    <property type="entry name" value="NrdR"/>
    <property type="match status" value="1"/>
</dbReference>
<dbReference type="InterPro" id="IPR005144">
    <property type="entry name" value="ATP-cone_dom"/>
</dbReference>
<dbReference type="InterPro" id="IPR055173">
    <property type="entry name" value="NrdR-like_N"/>
</dbReference>
<dbReference type="InterPro" id="IPR003796">
    <property type="entry name" value="RNR_NrdR-like"/>
</dbReference>
<dbReference type="NCBIfam" id="TIGR00244">
    <property type="entry name" value="transcriptional regulator NrdR"/>
    <property type="match status" value="1"/>
</dbReference>
<dbReference type="PANTHER" id="PTHR30455">
    <property type="entry name" value="TRANSCRIPTIONAL REPRESSOR NRDR"/>
    <property type="match status" value="1"/>
</dbReference>
<dbReference type="PANTHER" id="PTHR30455:SF2">
    <property type="entry name" value="TRANSCRIPTIONAL REPRESSOR NRDR"/>
    <property type="match status" value="1"/>
</dbReference>
<dbReference type="Pfam" id="PF03477">
    <property type="entry name" value="ATP-cone"/>
    <property type="match status" value="1"/>
</dbReference>
<dbReference type="Pfam" id="PF22811">
    <property type="entry name" value="Zn_ribbon_NrdR"/>
    <property type="match status" value="1"/>
</dbReference>
<dbReference type="PROSITE" id="PS51161">
    <property type="entry name" value="ATP_CONE"/>
    <property type="match status" value="1"/>
</dbReference>
<name>NRDR_PELTS</name>
<evidence type="ECO:0000255" key="1">
    <source>
        <dbReference type="HAMAP-Rule" id="MF_00440"/>
    </source>
</evidence>
<protein>
    <recommendedName>
        <fullName evidence="1">Transcriptional repressor NrdR</fullName>
    </recommendedName>
</protein>